<gene>
    <name type="primary">yubL</name>
    <name type="ordered locus">YPN_MT0093</name>
    <name type="ORF">YP516_4629</name>
</gene>
<keyword id="KW-0614">Plasmid</keyword>
<proteinExistence type="inferred from homology"/>
<sequence>MSEALAVLPDDTFTREQAEVVAAQYTNVAIEDDQGAHFRLVVRQNGEMVWRTWNFEPGGTYWLNRYIADYGIRKPQ</sequence>
<organism>
    <name type="scientific">Yersinia pestis bv. Antiqua (strain Nepal516)</name>
    <dbReference type="NCBI Taxonomy" id="377628"/>
    <lineage>
        <taxon>Bacteria</taxon>
        <taxon>Pseudomonadati</taxon>
        <taxon>Pseudomonadota</taxon>
        <taxon>Gammaproteobacteria</taxon>
        <taxon>Enterobacterales</taxon>
        <taxon>Yersiniaceae</taxon>
        <taxon>Yersinia</taxon>
    </lineage>
</organism>
<geneLocation type="plasmid">
    <name>pMT</name>
</geneLocation>
<protein>
    <recommendedName>
        <fullName>UPF0401 protein YubL</fullName>
    </recommendedName>
</protein>
<reference key="1">
    <citation type="journal article" date="2006" name="J. Bacteriol.">
        <title>Complete genome sequence of Yersinia pestis strains Antiqua and Nepal516: evidence of gene reduction in an emerging pathogen.</title>
        <authorList>
            <person name="Chain P.S.G."/>
            <person name="Hu P."/>
            <person name="Malfatti S.A."/>
            <person name="Radnedge L."/>
            <person name="Larimer F."/>
            <person name="Vergez L.M."/>
            <person name="Worsham P."/>
            <person name="Chu M.C."/>
            <person name="Andersen G.L."/>
        </authorList>
    </citation>
    <scope>NUCLEOTIDE SEQUENCE [LARGE SCALE GENOMIC DNA]</scope>
    <source>
        <strain>Nepal516</strain>
    </source>
</reference>
<reference key="2">
    <citation type="submission" date="2009-04" db="EMBL/GenBank/DDBJ databases">
        <title>Yersinia pestis Nepal516A whole genome shotgun sequencing project.</title>
        <authorList>
            <person name="Plunkett G. III"/>
            <person name="Anderson B.D."/>
            <person name="Baumler D.J."/>
            <person name="Burland V."/>
            <person name="Cabot E.L."/>
            <person name="Glasner J.D."/>
            <person name="Mau B."/>
            <person name="Neeno-Eckwall E."/>
            <person name="Perna N.T."/>
            <person name="Munk A.C."/>
            <person name="Tapia R."/>
            <person name="Green L.D."/>
            <person name="Rogers Y.C."/>
            <person name="Detter J.C."/>
            <person name="Bruce D.C."/>
            <person name="Brettin T.S."/>
        </authorList>
    </citation>
    <scope>NUCLEOTIDE SEQUENCE [LARGE SCALE GENOMIC DNA]</scope>
    <source>
        <strain>Nepal516</strain>
    </source>
</reference>
<comment type="similarity">
    <text evidence="1">Belongs to the UPF0401 family.</text>
</comment>
<name>YUBL_YERPN</name>
<evidence type="ECO:0000305" key="1"/>
<accession>Q1CC63</accession>
<accession>C4GYH8</accession>
<feature type="chain" id="PRO_0000268757" description="UPF0401 protein YubL">
    <location>
        <begin position="1"/>
        <end position="76"/>
    </location>
</feature>
<dbReference type="EMBL" id="CP000306">
    <property type="protein sequence ID" value="ABG20407.1"/>
    <property type="molecule type" value="Genomic_DNA"/>
</dbReference>
<dbReference type="EMBL" id="ACNQ01000020">
    <property type="protein sequence ID" value="EEO74210.1"/>
    <property type="molecule type" value="Genomic_DNA"/>
</dbReference>
<dbReference type="RefSeq" id="WP_002211745.1">
    <property type="nucleotide sequence ID" value="NZ_ACNQ01000020.1"/>
</dbReference>
<dbReference type="SMR" id="Q1CC63"/>
<dbReference type="KEGG" id="ypn:YPN_MT0093"/>
<dbReference type="HOGENOM" id="CLU_182912_1_0_6"/>
<dbReference type="Proteomes" id="UP000008936">
    <property type="component" value="Plasmid pMT"/>
</dbReference>
<dbReference type="Gene3D" id="3.30.160.130">
    <property type="entry name" value="ykff protein like domains"/>
    <property type="match status" value="1"/>
</dbReference>
<dbReference type="InterPro" id="IPR009253">
    <property type="entry name" value="DUF905"/>
</dbReference>
<dbReference type="InterPro" id="IPR038612">
    <property type="entry name" value="YkfF-like_sf"/>
</dbReference>
<dbReference type="Pfam" id="PF06006">
    <property type="entry name" value="DUF905"/>
    <property type="match status" value="1"/>
</dbReference>
<dbReference type="SUPFAM" id="SSF54786">
    <property type="entry name" value="YcfA/nrd intein domain"/>
    <property type="match status" value="1"/>
</dbReference>